<name>PSA1_SCHPO</name>
<evidence type="ECO:0000250" key="1"/>
<evidence type="ECO:0000255" key="2">
    <source>
        <dbReference type="PROSITE-ProRule" id="PRU00808"/>
    </source>
</evidence>
<evidence type="ECO:0000269" key="3">
    <source>
    </source>
</evidence>
<feature type="chain" id="PRO_0000124140" description="Probable proteasome subunit alpha type-1">
    <location>
        <begin position="1"/>
        <end position="244"/>
    </location>
</feature>
<organism>
    <name type="scientific">Schizosaccharomyces pombe (strain 972 / ATCC 24843)</name>
    <name type="common">Fission yeast</name>
    <dbReference type="NCBI Taxonomy" id="284812"/>
    <lineage>
        <taxon>Eukaryota</taxon>
        <taxon>Fungi</taxon>
        <taxon>Dikarya</taxon>
        <taxon>Ascomycota</taxon>
        <taxon>Taphrinomycotina</taxon>
        <taxon>Schizosaccharomycetes</taxon>
        <taxon>Schizosaccharomycetales</taxon>
        <taxon>Schizosaccharomycetaceae</taxon>
        <taxon>Schizosaccharomyces</taxon>
    </lineage>
</organism>
<accession>O94517</accession>
<sequence length="244" mass="26539">MSQARGFDRTITVFSPEGRLYQVEYAFKAFNNAGITSVGVTGKNCACVISQKKVPDKLIDASTVKHVFPITKGIGCVMTGSIADARAQVSRARSEAAEFEYKNGYPMPCDVLAKRMANIAQVSTQRAAMRPLGVAMTLVAVDDEIGPSLFKLDPAGFYIGYKATSAGPKQTETINWLEKRFKKDGIPSNLTDTVETGIQALMSSLSTDFKSTELQIGVVEDDKPFRVLSVEEIEAHLQSIAEKD</sequence>
<protein>
    <recommendedName>
        <fullName>Probable proteasome subunit alpha type-1</fullName>
    </recommendedName>
</protein>
<dbReference type="EMBL" id="CU329671">
    <property type="protein sequence ID" value="CAA22820.1"/>
    <property type="molecule type" value="Genomic_DNA"/>
</dbReference>
<dbReference type="PIR" id="T40592">
    <property type="entry name" value="T40592"/>
</dbReference>
<dbReference type="SMR" id="O94517"/>
<dbReference type="BioGRID" id="277654">
    <property type="interactions" value="14"/>
</dbReference>
<dbReference type="ComplexPortal" id="CPX-9077">
    <property type="entry name" value="26S proteasome complex"/>
</dbReference>
<dbReference type="FunCoup" id="O94517">
    <property type="interactions" value="512"/>
</dbReference>
<dbReference type="STRING" id="284812.O94517"/>
<dbReference type="MEROPS" id="T01.971"/>
<dbReference type="iPTMnet" id="O94517"/>
<dbReference type="PaxDb" id="4896-SPBC646.16.1"/>
<dbReference type="EnsemblFungi" id="SPBC646.16.1">
    <property type="protein sequence ID" value="SPBC646.16.1:pep"/>
    <property type="gene ID" value="SPBC646.16"/>
</dbReference>
<dbReference type="KEGG" id="spo:2541139"/>
<dbReference type="PomBase" id="SPBC646.16"/>
<dbReference type="VEuPathDB" id="FungiDB:SPBC646.16"/>
<dbReference type="eggNOG" id="KOG0182">
    <property type="taxonomic scope" value="Eukaryota"/>
</dbReference>
<dbReference type="HOGENOM" id="CLU_035750_4_1_1"/>
<dbReference type="InParanoid" id="O94517"/>
<dbReference type="OMA" id="YGYDMPV"/>
<dbReference type="PhylomeDB" id="O94517"/>
<dbReference type="Reactome" id="R-SPO-1236978">
    <property type="pathway name" value="Cross-presentation of soluble exogenous antigens (endosomes)"/>
</dbReference>
<dbReference type="Reactome" id="R-SPO-350562">
    <property type="pathway name" value="Regulation of ornithine decarboxylase (ODC)"/>
</dbReference>
<dbReference type="Reactome" id="R-SPO-5687128">
    <property type="pathway name" value="MAPK6/MAPK4 signaling"/>
</dbReference>
<dbReference type="Reactome" id="R-SPO-5689603">
    <property type="pathway name" value="UCH proteinases"/>
</dbReference>
<dbReference type="Reactome" id="R-SPO-5689880">
    <property type="pathway name" value="Ub-specific processing proteases"/>
</dbReference>
<dbReference type="Reactome" id="R-SPO-68949">
    <property type="pathway name" value="Orc1 removal from chromatin"/>
</dbReference>
<dbReference type="Reactome" id="R-SPO-69017">
    <property type="pathway name" value="CDK-mediated phosphorylation and removal of Cdc6"/>
</dbReference>
<dbReference type="Reactome" id="R-SPO-69601">
    <property type="pathway name" value="Ubiquitin Mediated Degradation of Phosphorylated Cdc25A"/>
</dbReference>
<dbReference type="Reactome" id="R-SPO-75815">
    <property type="pathway name" value="Ubiquitin-dependent degradation of Cyclin D"/>
</dbReference>
<dbReference type="Reactome" id="R-SPO-8854050">
    <property type="pathway name" value="FBXL7 down-regulates AURKA during mitotic entry and in early mitosis"/>
</dbReference>
<dbReference type="Reactome" id="R-SPO-8948751">
    <property type="pathway name" value="Regulation of PTEN stability and activity"/>
</dbReference>
<dbReference type="Reactome" id="R-SPO-8951664">
    <property type="pathway name" value="Neddylation"/>
</dbReference>
<dbReference type="Reactome" id="R-SPO-9755511">
    <property type="pathway name" value="KEAP1-NFE2L2 pathway"/>
</dbReference>
<dbReference type="Reactome" id="R-SPO-983168">
    <property type="pathway name" value="Antigen processing: Ubiquitination &amp; Proteasome degradation"/>
</dbReference>
<dbReference type="Reactome" id="R-SPO-9907900">
    <property type="pathway name" value="Proteasome assembly"/>
</dbReference>
<dbReference type="PRO" id="PR:O94517"/>
<dbReference type="Proteomes" id="UP000002485">
    <property type="component" value="Chromosome II"/>
</dbReference>
<dbReference type="GO" id="GO:0005829">
    <property type="term" value="C:cytosol"/>
    <property type="evidence" value="ECO:0007005"/>
    <property type="project" value="PomBase"/>
</dbReference>
<dbReference type="GO" id="GO:0005634">
    <property type="term" value="C:nucleus"/>
    <property type="evidence" value="ECO:0007005"/>
    <property type="project" value="PomBase"/>
</dbReference>
<dbReference type="GO" id="GO:0019773">
    <property type="term" value="C:proteasome core complex, alpha-subunit complex"/>
    <property type="evidence" value="ECO:0000314"/>
    <property type="project" value="PomBase"/>
</dbReference>
<dbReference type="GO" id="GO:0043161">
    <property type="term" value="P:proteasome-mediated ubiquitin-dependent protein catabolic process"/>
    <property type="evidence" value="ECO:0000318"/>
    <property type="project" value="GO_Central"/>
</dbReference>
<dbReference type="CDD" id="cd03754">
    <property type="entry name" value="proteasome_alpha_type_6"/>
    <property type="match status" value="1"/>
</dbReference>
<dbReference type="FunFam" id="3.60.20.10:FF:000055">
    <property type="entry name" value="Proteasome subunit alpha type"/>
    <property type="match status" value="1"/>
</dbReference>
<dbReference type="Gene3D" id="3.60.20.10">
    <property type="entry name" value="Glutamine Phosphoribosylpyrophosphate, subunit 1, domain 1"/>
    <property type="match status" value="1"/>
</dbReference>
<dbReference type="InterPro" id="IPR029055">
    <property type="entry name" value="Ntn_hydrolases_N"/>
</dbReference>
<dbReference type="InterPro" id="IPR050115">
    <property type="entry name" value="Proteasome_alpha"/>
</dbReference>
<dbReference type="InterPro" id="IPR023332">
    <property type="entry name" value="Proteasome_alpha-type"/>
</dbReference>
<dbReference type="InterPro" id="IPR000426">
    <property type="entry name" value="Proteasome_asu_N"/>
</dbReference>
<dbReference type="InterPro" id="IPR001353">
    <property type="entry name" value="Proteasome_sua/b"/>
</dbReference>
<dbReference type="InterPro" id="IPR034642">
    <property type="entry name" value="Proteasome_subunit_alpha6"/>
</dbReference>
<dbReference type="PANTHER" id="PTHR11599">
    <property type="entry name" value="PROTEASOME SUBUNIT ALPHA/BETA"/>
    <property type="match status" value="1"/>
</dbReference>
<dbReference type="Pfam" id="PF00227">
    <property type="entry name" value="Proteasome"/>
    <property type="match status" value="1"/>
</dbReference>
<dbReference type="Pfam" id="PF10584">
    <property type="entry name" value="Proteasome_A_N"/>
    <property type="match status" value="1"/>
</dbReference>
<dbReference type="SMART" id="SM00948">
    <property type="entry name" value="Proteasome_A_N"/>
    <property type="match status" value="1"/>
</dbReference>
<dbReference type="SUPFAM" id="SSF56235">
    <property type="entry name" value="N-terminal nucleophile aminohydrolases (Ntn hydrolases)"/>
    <property type="match status" value="1"/>
</dbReference>
<dbReference type="PROSITE" id="PS00388">
    <property type="entry name" value="PROTEASOME_ALPHA_1"/>
    <property type="match status" value="1"/>
</dbReference>
<dbReference type="PROSITE" id="PS51475">
    <property type="entry name" value="PROTEASOME_ALPHA_2"/>
    <property type="match status" value="1"/>
</dbReference>
<gene>
    <name type="ORF">SPBC646.16</name>
</gene>
<reference key="1">
    <citation type="journal article" date="2002" name="Nature">
        <title>The genome sequence of Schizosaccharomyces pombe.</title>
        <authorList>
            <person name="Wood V."/>
            <person name="Gwilliam R."/>
            <person name="Rajandream M.A."/>
            <person name="Lyne M.H."/>
            <person name="Lyne R."/>
            <person name="Stewart A."/>
            <person name="Sgouros J.G."/>
            <person name="Peat N."/>
            <person name="Hayles J."/>
            <person name="Baker S.G."/>
            <person name="Basham D."/>
            <person name="Bowman S."/>
            <person name="Brooks K."/>
            <person name="Brown D."/>
            <person name="Brown S."/>
            <person name="Chillingworth T."/>
            <person name="Churcher C.M."/>
            <person name="Collins M."/>
            <person name="Connor R."/>
            <person name="Cronin A."/>
            <person name="Davis P."/>
            <person name="Feltwell T."/>
            <person name="Fraser A."/>
            <person name="Gentles S."/>
            <person name="Goble A."/>
            <person name="Hamlin N."/>
            <person name="Harris D.E."/>
            <person name="Hidalgo J."/>
            <person name="Hodgson G."/>
            <person name="Holroyd S."/>
            <person name="Hornsby T."/>
            <person name="Howarth S."/>
            <person name="Huckle E.J."/>
            <person name="Hunt S."/>
            <person name="Jagels K."/>
            <person name="James K.D."/>
            <person name="Jones L."/>
            <person name="Jones M."/>
            <person name="Leather S."/>
            <person name="McDonald S."/>
            <person name="McLean J."/>
            <person name="Mooney P."/>
            <person name="Moule S."/>
            <person name="Mungall K.L."/>
            <person name="Murphy L.D."/>
            <person name="Niblett D."/>
            <person name="Odell C."/>
            <person name="Oliver K."/>
            <person name="O'Neil S."/>
            <person name="Pearson D."/>
            <person name="Quail M.A."/>
            <person name="Rabbinowitsch E."/>
            <person name="Rutherford K.M."/>
            <person name="Rutter S."/>
            <person name="Saunders D."/>
            <person name="Seeger K."/>
            <person name="Sharp S."/>
            <person name="Skelton J."/>
            <person name="Simmonds M.N."/>
            <person name="Squares R."/>
            <person name="Squares S."/>
            <person name="Stevens K."/>
            <person name="Taylor K."/>
            <person name="Taylor R.G."/>
            <person name="Tivey A."/>
            <person name="Walsh S.V."/>
            <person name="Warren T."/>
            <person name="Whitehead S."/>
            <person name="Woodward J.R."/>
            <person name="Volckaert G."/>
            <person name="Aert R."/>
            <person name="Robben J."/>
            <person name="Grymonprez B."/>
            <person name="Weltjens I."/>
            <person name="Vanstreels E."/>
            <person name="Rieger M."/>
            <person name="Schaefer M."/>
            <person name="Mueller-Auer S."/>
            <person name="Gabel C."/>
            <person name="Fuchs M."/>
            <person name="Duesterhoeft A."/>
            <person name="Fritzc C."/>
            <person name="Holzer E."/>
            <person name="Moestl D."/>
            <person name="Hilbert H."/>
            <person name="Borzym K."/>
            <person name="Langer I."/>
            <person name="Beck A."/>
            <person name="Lehrach H."/>
            <person name="Reinhardt R."/>
            <person name="Pohl T.M."/>
            <person name="Eger P."/>
            <person name="Zimmermann W."/>
            <person name="Wedler H."/>
            <person name="Wambutt R."/>
            <person name="Purnelle B."/>
            <person name="Goffeau A."/>
            <person name="Cadieu E."/>
            <person name="Dreano S."/>
            <person name="Gloux S."/>
            <person name="Lelaure V."/>
            <person name="Mottier S."/>
            <person name="Galibert F."/>
            <person name="Aves S.J."/>
            <person name="Xiang Z."/>
            <person name="Hunt C."/>
            <person name="Moore K."/>
            <person name="Hurst S.M."/>
            <person name="Lucas M."/>
            <person name="Rochet M."/>
            <person name="Gaillardin C."/>
            <person name="Tallada V.A."/>
            <person name="Garzon A."/>
            <person name="Thode G."/>
            <person name="Daga R.R."/>
            <person name="Cruzado L."/>
            <person name="Jimenez J."/>
            <person name="Sanchez M."/>
            <person name="del Rey F."/>
            <person name="Benito J."/>
            <person name="Dominguez A."/>
            <person name="Revuelta J.L."/>
            <person name="Moreno S."/>
            <person name="Armstrong J."/>
            <person name="Forsburg S.L."/>
            <person name="Cerutti L."/>
            <person name="Lowe T."/>
            <person name="McCombie W.R."/>
            <person name="Paulsen I."/>
            <person name="Potashkin J."/>
            <person name="Shpakovski G.V."/>
            <person name="Ussery D."/>
            <person name="Barrell B.G."/>
            <person name="Nurse P."/>
        </authorList>
    </citation>
    <scope>NUCLEOTIDE SEQUENCE [LARGE SCALE GENOMIC DNA]</scope>
    <source>
        <strain>972 / ATCC 24843</strain>
    </source>
</reference>
<reference key="2">
    <citation type="journal article" date="2006" name="Nat. Biotechnol.">
        <title>ORFeome cloning and global analysis of protein localization in the fission yeast Schizosaccharomyces pombe.</title>
        <authorList>
            <person name="Matsuyama A."/>
            <person name="Arai R."/>
            <person name="Yashiroda Y."/>
            <person name="Shirai A."/>
            <person name="Kamata A."/>
            <person name="Sekido S."/>
            <person name="Kobayashi Y."/>
            <person name="Hashimoto A."/>
            <person name="Hamamoto M."/>
            <person name="Hiraoka Y."/>
            <person name="Horinouchi S."/>
            <person name="Yoshida M."/>
        </authorList>
    </citation>
    <scope>SUBCELLULAR LOCATION [LARGE SCALE ANALYSIS]</scope>
</reference>
<keyword id="KW-0963">Cytoplasm</keyword>
<keyword id="KW-0539">Nucleus</keyword>
<keyword id="KW-0647">Proteasome</keyword>
<keyword id="KW-1185">Reference proteome</keyword>
<proteinExistence type="inferred from homology"/>
<comment type="function">
    <text evidence="1">The proteasome is a multicatalytic proteinase complex which is characterized by its ability to cleave peptides with Arg, Phe, Tyr, Leu, and Glu adjacent to the leaving group at neutral or slightly basic pH. The proteasome has an ATP-dependent proteolytic activity (By similarity).</text>
</comment>
<comment type="subunit">
    <text evidence="1">The 26S proteasome consists of a 20S proteasome core and two 19S regulatory subunits. The 20S proteasome core is composed of 28 subunits that are arranged in four stacked rings, resulting in a barrel-shaped structure. The two end rings are each formed by seven alpha subunits, and the two central rings are each formed by seven beta subunits. The catalytic chamber with the active sites is on the inside of the barrel (By similarity).</text>
</comment>
<comment type="subcellular location">
    <subcellularLocation>
        <location evidence="3">Cytoplasm</location>
    </subcellularLocation>
    <subcellularLocation>
        <location evidence="3">Nucleus</location>
    </subcellularLocation>
</comment>
<comment type="similarity">
    <text evidence="2">Belongs to the peptidase T1A family.</text>
</comment>